<name>BST1_COCIM</name>
<keyword id="KW-0256">Endoplasmic reticulum</keyword>
<keyword id="KW-0325">Glycoprotein</keyword>
<keyword id="KW-0378">Hydrolase</keyword>
<keyword id="KW-0472">Membrane</keyword>
<keyword id="KW-0653">Protein transport</keyword>
<keyword id="KW-1185">Reference proteome</keyword>
<keyword id="KW-0812">Transmembrane</keyword>
<keyword id="KW-1133">Transmembrane helix</keyword>
<keyword id="KW-0813">Transport</keyword>
<organism>
    <name type="scientific">Coccidioides immitis (strain RS)</name>
    <name type="common">Valley fever fungus</name>
    <dbReference type="NCBI Taxonomy" id="246410"/>
    <lineage>
        <taxon>Eukaryota</taxon>
        <taxon>Fungi</taxon>
        <taxon>Dikarya</taxon>
        <taxon>Ascomycota</taxon>
        <taxon>Pezizomycotina</taxon>
        <taxon>Eurotiomycetes</taxon>
        <taxon>Eurotiomycetidae</taxon>
        <taxon>Onygenales</taxon>
        <taxon>Onygenaceae</taxon>
        <taxon>Coccidioides</taxon>
    </lineage>
</organism>
<protein>
    <recommendedName>
        <fullName>GPI inositol-deacylase</fullName>
        <ecNumber>3.1.-.-</ecNumber>
    </recommendedName>
</protein>
<reference key="1">
    <citation type="journal article" date="2009" name="Genome Res.">
        <title>Comparative genomic analyses of the human fungal pathogens Coccidioides and their relatives.</title>
        <authorList>
            <person name="Sharpton T.J."/>
            <person name="Stajich J.E."/>
            <person name="Rounsley S.D."/>
            <person name="Gardner M.J."/>
            <person name="Wortman J.R."/>
            <person name="Jordar V.S."/>
            <person name="Maiti R."/>
            <person name="Kodira C.D."/>
            <person name="Neafsey D.E."/>
            <person name="Zeng Q."/>
            <person name="Hung C.-Y."/>
            <person name="McMahan C."/>
            <person name="Muszewska A."/>
            <person name="Grynberg M."/>
            <person name="Mandel M.A."/>
            <person name="Kellner E.M."/>
            <person name="Barker B.M."/>
            <person name="Galgiani J.N."/>
            <person name="Orbach M.J."/>
            <person name="Kirkland T.N."/>
            <person name="Cole G.T."/>
            <person name="Henn M.R."/>
            <person name="Birren B.W."/>
            <person name="Taylor J.W."/>
        </authorList>
    </citation>
    <scope>NUCLEOTIDE SEQUENCE [LARGE SCALE GENOMIC DNA]</scope>
    <source>
        <strain>RS</strain>
    </source>
</reference>
<reference key="2">
    <citation type="journal article" date="2010" name="Genome Res.">
        <title>Population genomic sequencing of Coccidioides fungi reveals recent hybridization and transposon control.</title>
        <authorList>
            <person name="Neafsey D.E."/>
            <person name="Barker B.M."/>
            <person name="Sharpton T.J."/>
            <person name="Stajich J.E."/>
            <person name="Park D.J."/>
            <person name="Whiston E."/>
            <person name="Hung C.-Y."/>
            <person name="McMahan C."/>
            <person name="White J."/>
            <person name="Sykes S."/>
            <person name="Heiman D."/>
            <person name="Young S."/>
            <person name="Zeng Q."/>
            <person name="Abouelleil A."/>
            <person name="Aftuck L."/>
            <person name="Bessette D."/>
            <person name="Brown A."/>
            <person name="FitzGerald M."/>
            <person name="Lui A."/>
            <person name="Macdonald J.P."/>
            <person name="Priest M."/>
            <person name="Orbach M.J."/>
            <person name="Galgiani J.N."/>
            <person name="Kirkland T.N."/>
            <person name="Cole G.T."/>
            <person name="Birren B.W."/>
            <person name="Henn M.R."/>
            <person name="Taylor J.W."/>
            <person name="Rounsley S.D."/>
        </authorList>
    </citation>
    <scope>GENOME REANNOTATION</scope>
    <source>
        <strain>RS</strain>
    </source>
</reference>
<gene>
    <name type="primary">BST1</name>
    <name type="ORF">CIMG_05264</name>
</gene>
<sequence length="1150" mass="127880">MQGRPNGASGDPNPRNDTSVTIDSDSDNGSRHRIAEVRGSSPSQIVPEKATILNDKVKAGPCLSTEKDLGIRKQLALSHTESIIASNPIAVMPLESPKQRLAMESSTESHRLRRARTRNPWICSGLVLFVTVSALLILSIIVYSYQSLQVDPQGCRTPSMRPTYIKLVGFDSEHTRFASKYGLYLYRERGVDEYSEEDIGIKGVPVLFLPGNAGSYKQGRSLASEASLYFHDVLQYHQERLKTGVRGLDFFMADFNEDMAAFHGQTLLDQAEYVNDALAYILSLYHDPRRPGRDLNLPDPTSVILIGHSMGGIVARTVLTMSNYQTNSVNTIITMSTPHARPPVSFDSDLVHTYKQVNNYWREAYSQKWANNNPLWHVTLISIAGGGGDTIVPSDYTSLSSLVPETHGFTVFTTTIPNVWTGMDHLSIAWCDSFRKVIIRSLFDVIDVRRSSQTKQRADRMSVFKKWYLTGMEVSAERKLPRKEHTTLLTLGDDTKSKSILRQDEKLTLRGFGHRKGPKSHLMPIPPRGGVPEKKLTLLTDQKLNSMETNRKLDVLFCSDFPLRAGQSATLPSLNLDLSGGSASSIRLVCKSAAEDVISLPTSTSSSKFAFDNVPSLSYLQYDLEDLTEYQFVVVIDKAETRYPGWLHAEFSDSSDSVIPTRVGLGRLLSAGLNIRLPAERPMVIDIKVPALHSSLLAYKLHVESKDCDGTELFKPMVRQYISGPYESKFFVNVRDAEINLHGIAPYMPPHIGDNAAATGISFQLWSDASCNGPLQLSLKVDVLGSMGKLAMRYRTVFAAFPLLVVSLVLRQQFKVYNQTGIFISFMQALDLCIRSSIPLLFLGLTFLASSLATSKNTLSKSASPNAGSNSTESVIDFSANDLLLGSQDAFFWFLVPLFGIISIGTCVIVNYVAMILIHALGAIRAILMSRKGYIKHDERGNTSIFWSLSTKNRVINTAVLLLFVATFIPYQFAYVVACVVQLVTCVQASWHARETRSASHSSFYNYVHSIFILMIWILPINVLVLIVWIHDLAVHWLTPFSSNHNVFSILPFMLLVETLTCGTMIPRITTHLRHITYVLFFFLAAYSAIYGVTYAYLLHHITNLVIAWLVGIHFFAGGFSLRNLSRVINDSDGVPNGSPITDGHIKKLP</sequence>
<feature type="chain" id="PRO_0000277635" description="GPI inositol-deacylase">
    <location>
        <begin position="1"/>
        <end position="1150"/>
    </location>
</feature>
<feature type="transmembrane region" description="Helical" evidence="2">
    <location>
        <begin position="122"/>
        <end position="142"/>
    </location>
</feature>
<feature type="transmembrane region" description="Helical" evidence="2">
    <location>
        <begin position="790"/>
        <end position="810"/>
    </location>
</feature>
<feature type="transmembrane region" description="Helical" evidence="2">
    <location>
        <begin position="829"/>
        <end position="849"/>
    </location>
</feature>
<feature type="transmembrane region" description="Helical" evidence="2">
    <location>
        <begin position="890"/>
        <end position="910"/>
    </location>
</feature>
<feature type="transmembrane region" description="Helical" evidence="2">
    <location>
        <begin position="960"/>
        <end position="980"/>
    </location>
</feature>
<feature type="transmembrane region" description="Helical" evidence="2">
    <location>
        <begin position="1010"/>
        <end position="1030"/>
    </location>
</feature>
<feature type="transmembrane region" description="Helical" evidence="2">
    <location>
        <begin position="1047"/>
        <end position="1067"/>
    </location>
</feature>
<feature type="transmembrane region" description="Helical" evidence="2">
    <location>
        <begin position="1079"/>
        <end position="1099"/>
    </location>
</feature>
<feature type="transmembrane region" description="Helical" evidence="2">
    <location>
        <begin position="1102"/>
        <end position="1122"/>
    </location>
</feature>
<feature type="region of interest" description="Disordered" evidence="3">
    <location>
        <begin position="1"/>
        <end position="43"/>
    </location>
</feature>
<feature type="active site" evidence="1">
    <location>
        <position position="309"/>
    </location>
</feature>
<feature type="glycosylation site" description="N-linked (GlcNAc...) asparagine" evidence="2">
    <location>
        <position position="16"/>
    </location>
</feature>
<feature type="glycosylation site" description="N-linked (GlcNAc...) asparagine" evidence="2">
    <location>
        <position position="28"/>
    </location>
</feature>
<feature type="glycosylation site" description="N-linked (GlcNAc...) asparagine" evidence="2">
    <location>
        <position position="818"/>
    </location>
</feature>
<feature type="glycosylation site" description="N-linked (GlcNAc...) asparagine" evidence="2">
    <location>
        <position position="870"/>
    </location>
</feature>
<feature type="glycosylation site" description="N-linked (GlcNAc...) asparagine" evidence="2">
    <location>
        <position position="942"/>
    </location>
</feature>
<feature type="glycosylation site" description="N-linked (GlcNAc...) asparagine" evidence="2">
    <location>
        <position position="1124"/>
    </location>
</feature>
<feature type="glycosylation site" description="N-linked (GlcNAc...) asparagine" evidence="2">
    <location>
        <position position="1130"/>
    </location>
</feature>
<proteinExistence type="inferred from homology"/>
<comment type="function">
    <text evidence="1">Involved in inositol deacylation of GPI-anchored proteins which plays important roles in the quality control and ER-associated degradation of GPI-anchored proteins.</text>
</comment>
<comment type="subcellular location">
    <subcellularLocation>
        <location evidence="1">Endoplasmic reticulum membrane</location>
        <topology evidence="1">Multi-pass membrane protein</topology>
    </subcellularLocation>
</comment>
<comment type="similarity">
    <text evidence="4">Belongs to the GPI inositol-deacylase family.</text>
</comment>
<evidence type="ECO:0000250" key="1"/>
<evidence type="ECO:0000255" key="2"/>
<evidence type="ECO:0000256" key="3">
    <source>
        <dbReference type="SAM" id="MobiDB-lite"/>
    </source>
</evidence>
<evidence type="ECO:0000305" key="4"/>
<accession>Q1DWP9</accession>
<accession>J3KFS3</accession>
<dbReference type="EC" id="3.1.-.-"/>
<dbReference type="EMBL" id="GG704914">
    <property type="protein sequence ID" value="EAS34240.3"/>
    <property type="molecule type" value="Genomic_DNA"/>
</dbReference>
<dbReference type="RefSeq" id="XP_001245823.1">
    <property type="nucleotide sequence ID" value="XM_001245822.2"/>
</dbReference>
<dbReference type="SMR" id="Q1DWP9"/>
<dbReference type="FunCoup" id="Q1DWP9">
    <property type="interactions" value="45"/>
</dbReference>
<dbReference type="STRING" id="246410.Q1DWP9"/>
<dbReference type="ESTHER" id="cocim-bst1">
    <property type="family name" value="PGAP1"/>
</dbReference>
<dbReference type="GlyCosmos" id="Q1DWP9">
    <property type="glycosylation" value="7 sites, No reported glycans"/>
</dbReference>
<dbReference type="GeneID" id="4565227"/>
<dbReference type="KEGG" id="cim:CIMG_05264"/>
<dbReference type="VEuPathDB" id="FungiDB:CIMG_05264"/>
<dbReference type="InParanoid" id="Q1DWP9"/>
<dbReference type="OMA" id="WVRNLAV"/>
<dbReference type="OrthoDB" id="348976at2759"/>
<dbReference type="Proteomes" id="UP000001261">
    <property type="component" value="Unassembled WGS sequence"/>
</dbReference>
<dbReference type="GO" id="GO:0005789">
    <property type="term" value="C:endoplasmic reticulum membrane"/>
    <property type="evidence" value="ECO:0007669"/>
    <property type="project" value="UniProtKB-SubCell"/>
</dbReference>
<dbReference type="GO" id="GO:0050185">
    <property type="term" value="F:phosphatidylinositol deacylase activity"/>
    <property type="evidence" value="ECO:0007669"/>
    <property type="project" value="TreeGrafter"/>
</dbReference>
<dbReference type="GO" id="GO:0006888">
    <property type="term" value="P:endoplasmic reticulum to Golgi vesicle-mediated transport"/>
    <property type="evidence" value="ECO:0007669"/>
    <property type="project" value="TreeGrafter"/>
</dbReference>
<dbReference type="GO" id="GO:0006505">
    <property type="term" value="P:GPI anchor metabolic process"/>
    <property type="evidence" value="ECO:0007669"/>
    <property type="project" value="TreeGrafter"/>
</dbReference>
<dbReference type="GO" id="GO:0015031">
    <property type="term" value="P:protein transport"/>
    <property type="evidence" value="ECO:0007669"/>
    <property type="project" value="UniProtKB-KW"/>
</dbReference>
<dbReference type="FunFam" id="3.40.50.1820:FF:000056">
    <property type="entry name" value="GPI inositol-deacylase"/>
    <property type="match status" value="1"/>
</dbReference>
<dbReference type="Gene3D" id="3.40.50.1820">
    <property type="entry name" value="alpha/beta hydrolase"/>
    <property type="match status" value="1"/>
</dbReference>
<dbReference type="InterPro" id="IPR029058">
    <property type="entry name" value="AB_hydrolase_fold"/>
</dbReference>
<dbReference type="InterPro" id="IPR012908">
    <property type="entry name" value="PGAP1-ab_dom-like"/>
</dbReference>
<dbReference type="InterPro" id="IPR039529">
    <property type="entry name" value="PGAP1/BST1"/>
</dbReference>
<dbReference type="InterPro" id="IPR056824">
    <property type="entry name" value="PGAP1_TMD"/>
</dbReference>
<dbReference type="PANTHER" id="PTHR15495:SF7">
    <property type="entry name" value="GPI INOSITOL-DEACYLASE"/>
    <property type="match status" value="1"/>
</dbReference>
<dbReference type="PANTHER" id="PTHR15495">
    <property type="entry name" value="NEGATIVE REGULATOR OF VESICLE FORMATION-RELATED"/>
    <property type="match status" value="1"/>
</dbReference>
<dbReference type="Pfam" id="PF07819">
    <property type="entry name" value="PGAP1"/>
    <property type="match status" value="1"/>
</dbReference>
<dbReference type="Pfam" id="PF25141">
    <property type="entry name" value="PGAP1_2nd"/>
    <property type="match status" value="1"/>
</dbReference>
<dbReference type="Pfam" id="PF25140">
    <property type="entry name" value="PGAP1_TMD"/>
    <property type="match status" value="1"/>
</dbReference>
<dbReference type="SUPFAM" id="SSF53474">
    <property type="entry name" value="alpha/beta-Hydrolases"/>
    <property type="match status" value="1"/>
</dbReference>
<dbReference type="PROSITE" id="PS00120">
    <property type="entry name" value="LIPASE_SER"/>
    <property type="match status" value="1"/>
</dbReference>